<accession>Q6DE18</accession>
<proteinExistence type="evidence at protein level"/>
<comment type="function">
    <text evidence="1 2 6">Component of the Arp2/3 complex, a multiprotein complex that mediates actin polymerization upon stimulation by nucleation-promoting factor (NPF) (By similarity). The Arp2/3 complex mediates the formation of branched actin networks in the cytoplasm, providing the force for cell motility (By similarity). In addition to its role in the cytoplasmic cytoskeleton, the Arp2/3 complex also promotes actin polymerization in the nucleus, thereby regulating gene transcription and repair of damaged DNA (Probable). The Arp2/3 complex promotes homologous recombination (HR) repair in response to DNA damage by promoting nuclear actin polymerization, leading to drive motility of double-strand breaks (DSBs) (By similarity).</text>
</comment>
<comment type="subunit">
    <text evidence="4">Component of the Arp2/3 complex composed of actr2/arp2, actr3/arp3, arpc1 (arpc1a or arpc1b), arpc2, arpc3, arpc4 and arpc5.</text>
</comment>
<comment type="subcellular location">
    <subcellularLocation>
        <location evidence="2">Cytoplasm</location>
        <location evidence="2">Cytoskeleton</location>
    </subcellularLocation>
    <subcellularLocation>
        <location evidence="2">Cell projection</location>
    </subcellularLocation>
    <subcellularLocation>
        <location evidence="4">Nucleus</location>
    </subcellularLocation>
</comment>
<comment type="similarity">
    <text evidence="5">Belongs to the ARPC5 family.</text>
</comment>
<sequence>MAKNTLSSRFRKVDIDEYDENKFVDDQLQEEPAEPQGPDEAEVDSLIRQGELLRAFQSALRNSPVNSKNQVAKERTQAIVLKVLTSFKSNEIEKAVNTLDPNGIDLLMKYIYKGFEKPTENSSAILLQWHEKAFVIGGLGSIVRVLTSRKTV</sequence>
<gene>
    <name type="primary">arpc5-b</name>
    <name evidence="8" type="synonym">arpc5l</name>
    <name evidence="7" type="ORF">XELAEV_18038444mg</name>
</gene>
<reference key="1">
    <citation type="journal article" date="2016" name="Nature">
        <title>Genome evolution in the allotetraploid frog Xenopus laevis.</title>
        <authorList>
            <person name="Session A.M."/>
            <person name="Uno Y."/>
            <person name="Kwon T."/>
            <person name="Chapman J.A."/>
            <person name="Toyoda A."/>
            <person name="Takahashi S."/>
            <person name="Fukui A."/>
            <person name="Hikosaka A."/>
            <person name="Suzuki A."/>
            <person name="Kondo M."/>
            <person name="van Heeringen S.J."/>
            <person name="Quigley I."/>
            <person name="Heinz S."/>
            <person name="Ogino H."/>
            <person name="Ochi H."/>
            <person name="Hellsten U."/>
            <person name="Lyons J.B."/>
            <person name="Simakov O."/>
            <person name="Putnam N."/>
            <person name="Stites J."/>
            <person name="Kuroki Y."/>
            <person name="Tanaka T."/>
            <person name="Michiue T."/>
            <person name="Watanabe M."/>
            <person name="Bogdanovic O."/>
            <person name="Lister R."/>
            <person name="Georgiou G."/>
            <person name="Paranjpe S.S."/>
            <person name="van Kruijsbergen I."/>
            <person name="Shu S."/>
            <person name="Carlson J."/>
            <person name="Kinoshita T."/>
            <person name="Ohta Y."/>
            <person name="Mawaribuchi S."/>
            <person name="Jenkins J."/>
            <person name="Grimwood J."/>
            <person name="Schmutz J."/>
            <person name="Mitros T."/>
            <person name="Mozaffari S.V."/>
            <person name="Suzuki Y."/>
            <person name="Haramoto Y."/>
            <person name="Yamamoto T.S."/>
            <person name="Takagi C."/>
            <person name="Heald R."/>
            <person name="Miller K."/>
            <person name="Haudenschild C."/>
            <person name="Kitzman J."/>
            <person name="Nakayama T."/>
            <person name="Izutsu Y."/>
            <person name="Robert J."/>
            <person name="Fortriede J."/>
            <person name="Burns K."/>
            <person name="Lotay V."/>
            <person name="Karimi K."/>
            <person name="Yasuoka Y."/>
            <person name="Dichmann D.S."/>
            <person name="Flajnik M.F."/>
            <person name="Houston D.W."/>
            <person name="Shendure J."/>
            <person name="DuPasquier L."/>
            <person name="Vize P.D."/>
            <person name="Zorn A.M."/>
            <person name="Ito M."/>
            <person name="Marcotte E.M."/>
            <person name="Wallingford J.B."/>
            <person name="Ito Y."/>
            <person name="Asashima M."/>
            <person name="Ueno N."/>
            <person name="Matsuda Y."/>
            <person name="Veenstra G.J."/>
            <person name="Fujiyama A."/>
            <person name="Harland R.M."/>
            <person name="Taira M."/>
            <person name="Rokhsar D.S."/>
        </authorList>
    </citation>
    <scope>NUCLEOTIDE SEQUENCE [LARGE SCALE GENOMIC DNA]</scope>
    <source>
        <strain>J</strain>
    </source>
</reference>
<reference key="2">
    <citation type="submission" date="2004-07" db="EMBL/GenBank/DDBJ databases">
        <authorList>
            <consortium name="NIH - Xenopus Gene Collection (XGC) project"/>
        </authorList>
    </citation>
    <scope>NUCLEOTIDE SEQUENCE [LARGE SCALE MRNA]</scope>
    <source>
        <tissue>Ovary</tissue>
    </source>
</reference>
<reference key="3">
    <citation type="journal article" date="2018" name="Nature">
        <title>Nuclear ARP2/3 drives DNA break clustering for homology-directed repair.</title>
        <authorList>
            <person name="Schrank B.R."/>
            <person name="Aparicio T."/>
            <person name="Li Y."/>
            <person name="Chang W."/>
            <person name="Chait B.T."/>
            <person name="Gundersen G.G."/>
            <person name="Gottesman M.E."/>
            <person name="Gautier J."/>
        </authorList>
    </citation>
    <scope>FUNCTION</scope>
    <scope>SUBCELLULAR LOCATION</scope>
    <scope>IDENTIFICATION IN THE ARP2/3 COMPLEX</scope>
    <scope>IDENTIFICATION BY MASS SPECTROMETRY</scope>
</reference>
<keyword id="KW-0009">Actin-binding</keyword>
<keyword id="KW-0966">Cell projection</keyword>
<keyword id="KW-0963">Cytoplasm</keyword>
<keyword id="KW-0206">Cytoskeleton</keyword>
<keyword id="KW-0539">Nucleus</keyword>
<keyword id="KW-1185">Reference proteome</keyword>
<evidence type="ECO:0000250" key="1">
    <source>
        <dbReference type="UniProtKB" id="O15511"/>
    </source>
</evidence>
<evidence type="ECO:0000250" key="2">
    <source>
        <dbReference type="UniProtKB" id="Q68FI4"/>
    </source>
</evidence>
<evidence type="ECO:0000256" key="3">
    <source>
        <dbReference type="SAM" id="MobiDB-lite"/>
    </source>
</evidence>
<evidence type="ECO:0000269" key="4">
    <source>
    </source>
</evidence>
<evidence type="ECO:0000305" key="5"/>
<evidence type="ECO:0000305" key="6">
    <source>
    </source>
</evidence>
<evidence type="ECO:0000312" key="7">
    <source>
        <dbReference type="EMBL" id="OCT67163.1"/>
    </source>
</evidence>
<evidence type="ECO:0000312" key="8">
    <source>
        <dbReference type="Xenbase" id="XB-GENE-490528"/>
    </source>
</evidence>
<dbReference type="EMBL" id="CM004480">
    <property type="protein sequence ID" value="OCT67163.1"/>
    <property type="molecule type" value="Genomic_DNA"/>
</dbReference>
<dbReference type="EMBL" id="BC077328">
    <property type="protein sequence ID" value="AAH77328.1"/>
    <property type="molecule type" value="mRNA"/>
</dbReference>
<dbReference type="RefSeq" id="NP_001086702.1">
    <property type="nucleotide sequence ID" value="NM_001093233.1"/>
</dbReference>
<dbReference type="SMR" id="Q6DE18"/>
<dbReference type="STRING" id="8355.Q6DE18"/>
<dbReference type="PaxDb" id="8355-Q6DE18"/>
<dbReference type="DNASU" id="446537"/>
<dbReference type="GeneID" id="446537"/>
<dbReference type="KEGG" id="xla:446537"/>
<dbReference type="AGR" id="Xenbase:XB-GENE-490528"/>
<dbReference type="CTD" id="446537"/>
<dbReference type="Xenbase" id="XB-GENE-490528">
    <property type="gene designation" value="arpc5l.L"/>
</dbReference>
<dbReference type="OMA" id="LWHEKAF"/>
<dbReference type="OrthoDB" id="429520at2759"/>
<dbReference type="Proteomes" id="UP000186698">
    <property type="component" value="Chromosome 8L"/>
</dbReference>
<dbReference type="Proteomes" id="UP000694892">
    <property type="component" value="Chromosome 8L"/>
</dbReference>
<dbReference type="Bgee" id="446537">
    <property type="expression patterns" value="Expressed in neurula embryo and 19 other cell types or tissues"/>
</dbReference>
<dbReference type="GO" id="GO:0005885">
    <property type="term" value="C:Arp2/3 protein complex"/>
    <property type="evidence" value="ECO:0000314"/>
    <property type="project" value="UniProtKB"/>
</dbReference>
<dbReference type="GO" id="GO:0042995">
    <property type="term" value="C:cell projection"/>
    <property type="evidence" value="ECO:0007669"/>
    <property type="project" value="UniProtKB-SubCell"/>
</dbReference>
<dbReference type="GO" id="GO:0005737">
    <property type="term" value="C:cytoplasm"/>
    <property type="evidence" value="ECO:0000318"/>
    <property type="project" value="GO_Central"/>
</dbReference>
<dbReference type="GO" id="GO:0005634">
    <property type="term" value="C:nucleus"/>
    <property type="evidence" value="ECO:0000314"/>
    <property type="project" value="UniProtKB"/>
</dbReference>
<dbReference type="GO" id="GO:0035861">
    <property type="term" value="C:site of double-strand break"/>
    <property type="evidence" value="ECO:0000314"/>
    <property type="project" value="UniProtKB"/>
</dbReference>
<dbReference type="GO" id="GO:0051015">
    <property type="term" value="F:actin filament binding"/>
    <property type="evidence" value="ECO:0000318"/>
    <property type="project" value="GO_Central"/>
</dbReference>
<dbReference type="GO" id="GO:0034314">
    <property type="term" value="P:Arp2/3 complex-mediated actin nucleation"/>
    <property type="evidence" value="ECO:0000318"/>
    <property type="project" value="GO_Central"/>
</dbReference>
<dbReference type="GO" id="GO:0016477">
    <property type="term" value="P:cell migration"/>
    <property type="evidence" value="ECO:0000318"/>
    <property type="project" value="GO_Central"/>
</dbReference>
<dbReference type="GO" id="GO:0030833">
    <property type="term" value="P:regulation of actin filament polymerization"/>
    <property type="evidence" value="ECO:0007669"/>
    <property type="project" value="InterPro"/>
</dbReference>
<dbReference type="FunFam" id="1.25.40.190:FF:000001">
    <property type="entry name" value="Actin-related protein 2/3 complex subunit 5"/>
    <property type="match status" value="1"/>
</dbReference>
<dbReference type="Gene3D" id="1.25.40.190">
    <property type="entry name" value="Actin-related protein 2/3 complex subunit 5"/>
    <property type="match status" value="1"/>
</dbReference>
<dbReference type="InterPro" id="IPR006789">
    <property type="entry name" value="ARPC5"/>
</dbReference>
<dbReference type="InterPro" id="IPR036743">
    <property type="entry name" value="ARPC5_sf"/>
</dbReference>
<dbReference type="PANTHER" id="PTHR12644">
    <property type="entry name" value="ARP2/3 COMPLEX 16 KD SUBUNIT P16-ARC"/>
    <property type="match status" value="1"/>
</dbReference>
<dbReference type="Pfam" id="PF04699">
    <property type="entry name" value="P16-Arc"/>
    <property type="match status" value="1"/>
</dbReference>
<dbReference type="PIRSF" id="PIRSF039096">
    <property type="entry name" value="p16-ARC"/>
    <property type="match status" value="1"/>
</dbReference>
<dbReference type="SUPFAM" id="SSF69103">
    <property type="entry name" value="Arp2/3 complex 16 kDa subunit ARPC5"/>
    <property type="match status" value="1"/>
</dbReference>
<organism>
    <name type="scientific">Xenopus laevis</name>
    <name type="common">African clawed frog</name>
    <dbReference type="NCBI Taxonomy" id="8355"/>
    <lineage>
        <taxon>Eukaryota</taxon>
        <taxon>Metazoa</taxon>
        <taxon>Chordata</taxon>
        <taxon>Craniata</taxon>
        <taxon>Vertebrata</taxon>
        <taxon>Euteleostomi</taxon>
        <taxon>Amphibia</taxon>
        <taxon>Batrachia</taxon>
        <taxon>Anura</taxon>
        <taxon>Pipoidea</taxon>
        <taxon>Pipidae</taxon>
        <taxon>Xenopodinae</taxon>
        <taxon>Xenopus</taxon>
        <taxon>Xenopus</taxon>
    </lineage>
</organism>
<feature type="chain" id="PRO_0000445565" description="Actin-related protein 2/3 complex subunit 5-B">
    <location>
        <begin position="1"/>
        <end position="152"/>
    </location>
</feature>
<feature type="region of interest" description="Disordered" evidence="3">
    <location>
        <begin position="21"/>
        <end position="44"/>
    </location>
</feature>
<feature type="compositionally biased region" description="Acidic residues" evidence="3">
    <location>
        <begin position="27"/>
        <end position="43"/>
    </location>
</feature>
<name>APC5B_XENLA</name>
<protein>
    <recommendedName>
        <fullName evidence="5">Actin-related protein 2/3 complex subunit 5-B</fullName>
    </recommendedName>
    <alternativeName>
        <fullName evidence="5">Actin-related protein 2/3 complex subunit 5-like</fullName>
    </alternativeName>
</protein>